<evidence type="ECO:0000250" key="1"/>
<evidence type="ECO:0000250" key="2">
    <source>
        <dbReference type="UniProtKB" id="P19938"/>
    </source>
</evidence>
<evidence type="ECO:0000305" key="3"/>
<sequence>MAYSLWNDQIVEEGSITISPEDRGYQFGDGIYEVIKVYNGHMFTAQEHIDRFYASAEKIRLVIPYTKDVLHKLLHDLIEKNNLNTGHVYFQITRGTTSRNHIFPDASVPAVLTGNVKTGERSIENFEKGVKATLVEDVRWLRCDIKSLNLLGAVLAKQEASEKGCYEAILHRGDIITECSSANVYGIKDGKLYTHPANNYILNGITRQVILKCAAEINLPVIEEPMTKGDLLTMDEIIVSSVSSEVTPVIDVDGQQIGAGVPGEWTRKLQKAFEAKLPISINA</sequence>
<organism>
    <name type="scientific">Lysinibacillus sphaericus</name>
    <name type="common">Bacillus sphaericus</name>
    <dbReference type="NCBI Taxonomy" id="1421"/>
    <lineage>
        <taxon>Bacteria</taxon>
        <taxon>Bacillati</taxon>
        <taxon>Bacillota</taxon>
        <taxon>Bacilli</taxon>
        <taxon>Bacillales</taxon>
        <taxon>Bacillaceae</taxon>
        <taxon>Lysinibacillus</taxon>
    </lineage>
</organism>
<dbReference type="EC" id="2.6.1.21"/>
<dbReference type="EMBL" id="U26732">
    <property type="protein sequence ID" value="AAA68028.1"/>
    <property type="molecule type" value="Genomic_DNA"/>
</dbReference>
<dbReference type="EMBL" id="AF081278">
    <property type="protein sequence ID" value="AAC33964.1"/>
    <property type="molecule type" value="Genomic_DNA"/>
</dbReference>
<dbReference type="RefSeq" id="WP_024363741.1">
    <property type="nucleotide sequence ID" value="NZ_UFSZ01000001.1"/>
</dbReference>
<dbReference type="SMR" id="P54693"/>
<dbReference type="STRING" id="1421.A2J09_13390"/>
<dbReference type="GeneID" id="48275768"/>
<dbReference type="KEGG" id="ag:AAA68028"/>
<dbReference type="BioCyc" id="MetaCyc:MONOMER-124422"/>
<dbReference type="SABIO-RK" id="P54693"/>
<dbReference type="GO" id="GO:0005829">
    <property type="term" value="C:cytosol"/>
    <property type="evidence" value="ECO:0007669"/>
    <property type="project" value="TreeGrafter"/>
</dbReference>
<dbReference type="GO" id="GO:0047810">
    <property type="term" value="F:D-alanine-2-oxoglutarate aminotransferase activity"/>
    <property type="evidence" value="ECO:0000250"/>
    <property type="project" value="UniProtKB"/>
</dbReference>
<dbReference type="GO" id="GO:0030170">
    <property type="term" value="F:pyridoxal phosphate binding"/>
    <property type="evidence" value="ECO:0000250"/>
    <property type="project" value="UniProtKB"/>
</dbReference>
<dbReference type="GO" id="GO:0046437">
    <property type="term" value="P:D-amino acid biosynthetic process"/>
    <property type="evidence" value="ECO:0000250"/>
    <property type="project" value="UniProtKB"/>
</dbReference>
<dbReference type="GO" id="GO:0019478">
    <property type="term" value="P:D-amino acid catabolic process"/>
    <property type="evidence" value="ECO:0000250"/>
    <property type="project" value="UniProtKB"/>
</dbReference>
<dbReference type="CDD" id="cd01558">
    <property type="entry name" value="D-AAT_like"/>
    <property type="match status" value="1"/>
</dbReference>
<dbReference type="FunFam" id="3.20.10.10:FF:000002">
    <property type="entry name" value="D-alanine aminotransferase"/>
    <property type="match status" value="1"/>
</dbReference>
<dbReference type="FunFam" id="3.30.470.10:FF:000009">
    <property type="entry name" value="D-alanine aminotransferase"/>
    <property type="match status" value="1"/>
</dbReference>
<dbReference type="Gene3D" id="3.30.470.10">
    <property type="match status" value="1"/>
</dbReference>
<dbReference type="Gene3D" id="3.20.10.10">
    <property type="entry name" value="D-amino Acid Aminotransferase, subunit A, domain 2"/>
    <property type="match status" value="1"/>
</dbReference>
<dbReference type="InterPro" id="IPR001544">
    <property type="entry name" value="Aminotrans_IV"/>
</dbReference>
<dbReference type="InterPro" id="IPR018300">
    <property type="entry name" value="Aminotrans_IV_CS"/>
</dbReference>
<dbReference type="InterPro" id="IPR036038">
    <property type="entry name" value="Aminotransferase-like"/>
</dbReference>
<dbReference type="InterPro" id="IPR043132">
    <property type="entry name" value="BCAT-like_C"/>
</dbReference>
<dbReference type="InterPro" id="IPR043131">
    <property type="entry name" value="BCAT-like_N"/>
</dbReference>
<dbReference type="InterPro" id="IPR050571">
    <property type="entry name" value="Class-IV_PLP-Dep_Aminotrnsfr"/>
</dbReference>
<dbReference type="InterPro" id="IPR005784">
    <property type="entry name" value="D_amino_transT"/>
</dbReference>
<dbReference type="NCBIfam" id="TIGR01121">
    <property type="entry name" value="D_amino_aminoT"/>
    <property type="match status" value="1"/>
</dbReference>
<dbReference type="PANTHER" id="PTHR42743">
    <property type="entry name" value="AMINO-ACID AMINOTRANSFERASE"/>
    <property type="match status" value="1"/>
</dbReference>
<dbReference type="PANTHER" id="PTHR42743:SF10">
    <property type="entry name" value="D-ALANINE AMINOTRANSFERASE"/>
    <property type="match status" value="1"/>
</dbReference>
<dbReference type="Pfam" id="PF01063">
    <property type="entry name" value="Aminotran_4"/>
    <property type="match status" value="1"/>
</dbReference>
<dbReference type="SUPFAM" id="SSF56752">
    <property type="entry name" value="D-aminoacid aminotransferase-like PLP-dependent enzymes"/>
    <property type="match status" value="1"/>
</dbReference>
<dbReference type="PROSITE" id="PS00770">
    <property type="entry name" value="AA_TRANSFER_CLASS_4"/>
    <property type="match status" value="1"/>
</dbReference>
<proteinExistence type="inferred from homology"/>
<reference key="1">
    <citation type="submission" date="1995-06" db="EMBL/GenBank/DDBJ databases">
        <authorList>
            <person name="Fotheringham I.G."/>
            <person name="Taylor P.P."/>
            <person name="Bledig S.A."/>
        </authorList>
    </citation>
    <scope>NUCLEOTIDE SEQUENCE [GENOMIC DNA]</scope>
    <source>
        <strain>ATCC 10208 / DSM 5019 / NBRC 3525 / NCIMB 11935 / NRS 966 / 1911</strain>
    </source>
</reference>
<reference key="2">
    <citation type="submission" date="1998-07" db="EMBL/GenBank/DDBJ databases">
        <title>Cloning and overexpression of D-amino acid aminotransferase from Bacillus sphaericus in Escherichia coli.</title>
        <authorList>
            <person name="Hwang T.S."/>
            <person name="Wang N.C."/>
            <person name="Wu S.P."/>
            <person name="Yang C.L."/>
            <person name="Tsai H."/>
        </authorList>
    </citation>
    <scope>NUCLEOTIDE SEQUENCE [GENOMIC DNA]</scope>
    <source>
        <strain>ATCC 14577 / DSM 28 / JCM 2502 / NCIMB 9370 / NCTC 10338 / VKM B-509</strain>
    </source>
</reference>
<feature type="chain" id="PRO_0000103247" description="D-alanine aminotransferase">
    <location>
        <begin position="1"/>
        <end position="283"/>
    </location>
</feature>
<feature type="active site" description="Proton acceptor" evidence="2">
    <location>
        <position position="146"/>
    </location>
</feature>
<feature type="binding site" evidence="2">
    <location>
        <position position="32"/>
    </location>
    <ligand>
        <name>substrate</name>
    </ligand>
</feature>
<feature type="binding site" evidence="2">
    <location>
        <position position="51"/>
    </location>
    <ligand>
        <name>pyridoxal 5'-phosphate</name>
        <dbReference type="ChEBI" id="CHEBI:597326"/>
    </ligand>
</feature>
<feature type="binding site" evidence="2">
    <location>
        <position position="99"/>
    </location>
    <ligand>
        <name>substrate</name>
    </ligand>
</feature>
<feature type="binding site" evidence="1 2">
    <location>
        <position position="101"/>
    </location>
    <ligand>
        <name>substrate</name>
    </ligand>
</feature>
<feature type="binding site" evidence="2">
    <location>
        <position position="178"/>
    </location>
    <ligand>
        <name>pyridoxal 5'-phosphate</name>
        <dbReference type="ChEBI" id="CHEBI:597326"/>
    </ligand>
</feature>
<feature type="modified residue" description="N6-(pyridoxal phosphate)lysine" evidence="2">
    <location>
        <position position="146"/>
    </location>
</feature>
<gene>
    <name type="primary">dat</name>
</gene>
<comment type="function">
    <text evidence="1">Acts on the D-isomers of alanine, leucine, aspartate, glutamate, aminobutyrate, norvaline and asparagine. The enzyme transfers an amino group from a substrate D-amino acid to the pyridoxal phosphate cofactor to form pyridoxamine and an alpha-keto acid in the first half-reaction. The second half-reaction is the reverse of the first, transferring the amino group from the pyridoxamine to a second alpha-keto acid to form the product D-amino acid via a ping-pong mechanism. This is an important process in the formation of D-alanine and D-glutamate, which are essential bacterial cell wall components (By similarity).</text>
</comment>
<comment type="catalytic activity">
    <reaction>
        <text>D-alanine + 2-oxoglutarate = D-glutamate + pyruvate</text>
        <dbReference type="Rhea" id="RHEA:15869"/>
        <dbReference type="ChEBI" id="CHEBI:15361"/>
        <dbReference type="ChEBI" id="CHEBI:16810"/>
        <dbReference type="ChEBI" id="CHEBI:29986"/>
        <dbReference type="ChEBI" id="CHEBI:57416"/>
        <dbReference type="EC" id="2.6.1.21"/>
    </reaction>
</comment>
<comment type="cofactor">
    <cofactor evidence="1">
        <name>pyridoxal 5'-phosphate</name>
        <dbReference type="ChEBI" id="CHEBI:597326"/>
    </cofactor>
</comment>
<comment type="subunit">
    <text evidence="1">Homodimer.</text>
</comment>
<comment type="similarity">
    <text evidence="3">Belongs to the class-IV pyridoxal-phosphate-dependent aminotransferase family.</text>
</comment>
<name>DAAA_LYSSH</name>
<accession>P54693</accession>
<protein>
    <recommendedName>
        <fullName>D-alanine aminotransferase</fullName>
        <ecNumber>2.6.1.21</ecNumber>
    </recommendedName>
    <alternativeName>
        <fullName>D-amino acid aminotransferase</fullName>
    </alternativeName>
    <alternativeName>
        <fullName>D-amino acid transaminase</fullName>
        <shortName>DAAT</shortName>
    </alternativeName>
    <alternativeName>
        <fullName>D-aspartate aminotransferase</fullName>
    </alternativeName>
</protein>
<keyword id="KW-0032">Aminotransferase</keyword>
<keyword id="KW-0663">Pyridoxal phosphate</keyword>
<keyword id="KW-0808">Transferase</keyword>